<dbReference type="EC" id="3.6.1.31" evidence="1"/>
<dbReference type="EMBL" id="CP000440">
    <property type="protein sequence ID" value="ABI85911.1"/>
    <property type="molecule type" value="Genomic_DNA"/>
</dbReference>
<dbReference type="RefSeq" id="WP_006751798.1">
    <property type="nucleotide sequence ID" value="NZ_CP009798.1"/>
</dbReference>
<dbReference type="SMR" id="Q0BIW2"/>
<dbReference type="KEGG" id="bam:Bamb_0351"/>
<dbReference type="PATRIC" id="fig|339670.21.peg.1267"/>
<dbReference type="eggNOG" id="COG0140">
    <property type="taxonomic scope" value="Bacteria"/>
</dbReference>
<dbReference type="UniPathway" id="UPA00031">
    <property type="reaction ID" value="UER00007"/>
</dbReference>
<dbReference type="Proteomes" id="UP000000662">
    <property type="component" value="Chromosome 1"/>
</dbReference>
<dbReference type="GO" id="GO:0005737">
    <property type="term" value="C:cytoplasm"/>
    <property type="evidence" value="ECO:0007669"/>
    <property type="project" value="UniProtKB-SubCell"/>
</dbReference>
<dbReference type="GO" id="GO:0005524">
    <property type="term" value="F:ATP binding"/>
    <property type="evidence" value="ECO:0007669"/>
    <property type="project" value="UniProtKB-KW"/>
</dbReference>
<dbReference type="GO" id="GO:0004636">
    <property type="term" value="F:phosphoribosyl-ATP diphosphatase activity"/>
    <property type="evidence" value="ECO:0007669"/>
    <property type="project" value="UniProtKB-UniRule"/>
</dbReference>
<dbReference type="GO" id="GO:0000105">
    <property type="term" value="P:L-histidine biosynthetic process"/>
    <property type="evidence" value="ECO:0007669"/>
    <property type="project" value="UniProtKB-UniRule"/>
</dbReference>
<dbReference type="CDD" id="cd11534">
    <property type="entry name" value="NTP-PPase_HisIE_like"/>
    <property type="match status" value="1"/>
</dbReference>
<dbReference type="Gene3D" id="1.10.287.1080">
    <property type="entry name" value="MazG-like"/>
    <property type="match status" value="1"/>
</dbReference>
<dbReference type="HAMAP" id="MF_01020">
    <property type="entry name" value="HisE"/>
    <property type="match status" value="1"/>
</dbReference>
<dbReference type="InterPro" id="IPR008179">
    <property type="entry name" value="HisE"/>
</dbReference>
<dbReference type="InterPro" id="IPR021130">
    <property type="entry name" value="PRib-ATP_PPHydrolase-like"/>
</dbReference>
<dbReference type="NCBIfam" id="TIGR03188">
    <property type="entry name" value="histidine_hisI"/>
    <property type="match status" value="1"/>
</dbReference>
<dbReference type="NCBIfam" id="NF001611">
    <property type="entry name" value="PRK00400.1-3"/>
    <property type="match status" value="1"/>
</dbReference>
<dbReference type="PANTHER" id="PTHR42945">
    <property type="entry name" value="HISTIDINE BIOSYNTHESIS BIFUNCTIONAL PROTEIN"/>
    <property type="match status" value="1"/>
</dbReference>
<dbReference type="PANTHER" id="PTHR42945:SF9">
    <property type="entry name" value="HISTIDINE BIOSYNTHESIS BIFUNCTIONAL PROTEIN HISIE"/>
    <property type="match status" value="1"/>
</dbReference>
<dbReference type="Pfam" id="PF01503">
    <property type="entry name" value="PRA-PH"/>
    <property type="match status" value="1"/>
</dbReference>
<dbReference type="SUPFAM" id="SSF101386">
    <property type="entry name" value="all-alpha NTP pyrophosphatases"/>
    <property type="match status" value="1"/>
</dbReference>
<evidence type="ECO:0000255" key="1">
    <source>
        <dbReference type="HAMAP-Rule" id="MF_01020"/>
    </source>
</evidence>
<protein>
    <recommendedName>
        <fullName evidence="1">Phosphoribosyl-ATP pyrophosphatase</fullName>
        <shortName evidence="1">PRA-PH</shortName>
        <ecNumber evidence="1">3.6.1.31</ecNumber>
    </recommendedName>
</protein>
<sequence>MTQSTEDTLLRLAAVIDSRKGGDPDQSYVSRLFHKGDDAVLKKIGEEATEVVLAAKDVRQGGAPTALVGEVADLWFHCLVMLSHFDLSPADVIGELERREGLSGIEEKALRKRREREENGG</sequence>
<organism>
    <name type="scientific">Burkholderia ambifaria (strain ATCC BAA-244 / DSM 16087 / CCUG 44356 / LMG 19182 / AMMD)</name>
    <name type="common">Burkholderia cepacia (strain AMMD)</name>
    <dbReference type="NCBI Taxonomy" id="339670"/>
    <lineage>
        <taxon>Bacteria</taxon>
        <taxon>Pseudomonadati</taxon>
        <taxon>Pseudomonadota</taxon>
        <taxon>Betaproteobacteria</taxon>
        <taxon>Burkholderiales</taxon>
        <taxon>Burkholderiaceae</taxon>
        <taxon>Burkholderia</taxon>
        <taxon>Burkholderia cepacia complex</taxon>
    </lineage>
</organism>
<gene>
    <name evidence="1" type="primary">hisE</name>
    <name type="ordered locus">Bamb_0351</name>
</gene>
<keyword id="KW-0028">Amino-acid biosynthesis</keyword>
<keyword id="KW-0067">ATP-binding</keyword>
<keyword id="KW-0963">Cytoplasm</keyword>
<keyword id="KW-0368">Histidine biosynthesis</keyword>
<keyword id="KW-0378">Hydrolase</keyword>
<keyword id="KW-0547">Nucleotide-binding</keyword>
<accession>Q0BIW2</accession>
<proteinExistence type="inferred from homology"/>
<comment type="catalytic activity">
    <reaction evidence="1">
        <text>1-(5-phospho-beta-D-ribosyl)-ATP + H2O = 1-(5-phospho-beta-D-ribosyl)-5'-AMP + diphosphate + H(+)</text>
        <dbReference type="Rhea" id="RHEA:22828"/>
        <dbReference type="ChEBI" id="CHEBI:15377"/>
        <dbReference type="ChEBI" id="CHEBI:15378"/>
        <dbReference type="ChEBI" id="CHEBI:33019"/>
        <dbReference type="ChEBI" id="CHEBI:59457"/>
        <dbReference type="ChEBI" id="CHEBI:73183"/>
        <dbReference type="EC" id="3.6.1.31"/>
    </reaction>
</comment>
<comment type="pathway">
    <text evidence="1">Amino-acid biosynthesis; L-histidine biosynthesis; L-histidine from 5-phospho-alpha-D-ribose 1-diphosphate: step 2/9.</text>
</comment>
<comment type="subcellular location">
    <subcellularLocation>
        <location evidence="1">Cytoplasm</location>
    </subcellularLocation>
</comment>
<comment type="similarity">
    <text evidence="1">Belongs to the PRA-PH family.</text>
</comment>
<feature type="chain" id="PRO_1000063326" description="Phosphoribosyl-ATP pyrophosphatase">
    <location>
        <begin position="1"/>
        <end position="121"/>
    </location>
</feature>
<name>HIS2_BURCM</name>
<reference key="1">
    <citation type="submission" date="2006-08" db="EMBL/GenBank/DDBJ databases">
        <title>Complete sequence of chromosome 1 of Burkholderia cepacia AMMD.</title>
        <authorList>
            <person name="Copeland A."/>
            <person name="Lucas S."/>
            <person name="Lapidus A."/>
            <person name="Barry K."/>
            <person name="Detter J.C."/>
            <person name="Glavina del Rio T."/>
            <person name="Hammon N."/>
            <person name="Israni S."/>
            <person name="Pitluck S."/>
            <person name="Bruce D."/>
            <person name="Chain P."/>
            <person name="Malfatti S."/>
            <person name="Shin M."/>
            <person name="Vergez L."/>
            <person name="Schmutz J."/>
            <person name="Larimer F."/>
            <person name="Land M."/>
            <person name="Hauser L."/>
            <person name="Kyrpides N."/>
            <person name="Kim E."/>
            <person name="Parke J."/>
            <person name="Coenye T."/>
            <person name="Konstantinidis K."/>
            <person name="Ramette A."/>
            <person name="Tiedje J."/>
            <person name="Richardson P."/>
        </authorList>
    </citation>
    <scope>NUCLEOTIDE SEQUENCE [LARGE SCALE GENOMIC DNA]</scope>
    <source>
        <strain>ATCC BAA-244 / DSM 16087 / CCUG 44356 / LMG 19182 / AMMD</strain>
    </source>
</reference>